<keyword id="KW-0240">DNA-directed RNA polymerase</keyword>
<keyword id="KW-0460">Magnesium</keyword>
<keyword id="KW-0479">Metal-binding</keyword>
<keyword id="KW-0548">Nucleotidyltransferase</keyword>
<keyword id="KW-0804">Transcription</keyword>
<keyword id="KW-0808">Transferase</keyword>
<keyword id="KW-0862">Zinc</keyword>
<protein>
    <recommendedName>
        <fullName evidence="1">DNA-directed RNA polymerase subunit beta'</fullName>
        <shortName evidence="1">RNAP subunit beta'</shortName>
        <ecNumber evidence="1">2.7.7.6</ecNumber>
    </recommendedName>
    <alternativeName>
        <fullName evidence="1">RNA polymerase subunit beta'</fullName>
    </alternativeName>
    <alternativeName>
        <fullName evidence="1">Transcriptase subunit beta'</fullName>
    </alternativeName>
</protein>
<evidence type="ECO:0000255" key="1">
    <source>
        <dbReference type="HAMAP-Rule" id="MF_01322"/>
    </source>
</evidence>
<evidence type="ECO:0000305" key="2"/>
<organism>
    <name type="scientific">Streptococcus pyogenes serotype M3 (strain SSI-1)</name>
    <dbReference type="NCBI Taxonomy" id="193567"/>
    <lineage>
        <taxon>Bacteria</taxon>
        <taxon>Bacillati</taxon>
        <taxon>Bacillota</taxon>
        <taxon>Bacilli</taxon>
        <taxon>Lactobacillales</taxon>
        <taxon>Streptococcaceae</taxon>
        <taxon>Streptococcus</taxon>
    </lineage>
</organism>
<feature type="chain" id="PRO_0000411556" description="DNA-directed RNA polymerase subunit beta'">
    <location>
        <begin position="1"/>
        <end position="1207"/>
    </location>
</feature>
<feature type="binding site" evidence="1">
    <location>
        <position position="60"/>
    </location>
    <ligand>
        <name>Zn(2+)</name>
        <dbReference type="ChEBI" id="CHEBI:29105"/>
        <label>1</label>
    </ligand>
</feature>
<feature type="binding site" evidence="1">
    <location>
        <position position="62"/>
    </location>
    <ligand>
        <name>Zn(2+)</name>
        <dbReference type="ChEBI" id="CHEBI:29105"/>
        <label>1</label>
    </ligand>
</feature>
<feature type="binding site" evidence="1">
    <location>
        <position position="75"/>
    </location>
    <ligand>
        <name>Zn(2+)</name>
        <dbReference type="ChEBI" id="CHEBI:29105"/>
        <label>1</label>
    </ligand>
</feature>
<feature type="binding site" evidence="1">
    <location>
        <position position="78"/>
    </location>
    <ligand>
        <name>Zn(2+)</name>
        <dbReference type="ChEBI" id="CHEBI:29105"/>
        <label>1</label>
    </ligand>
</feature>
<feature type="binding site" evidence="1">
    <location>
        <position position="450"/>
    </location>
    <ligand>
        <name>Mg(2+)</name>
        <dbReference type="ChEBI" id="CHEBI:18420"/>
    </ligand>
</feature>
<feature type="binding site" evidence="1">
    <location>
        <position position="452"/>
    </location>
    <ligand>
        <name>Mg(2+)</name>
        <dbReference type="ChEBI" id="CHEBI:18420"/>
    </ligand>
</feature>
<feature type="binding site" evidence="1">
    <location>
        <position position="454"/>
    </location>
    <ligand>
        <name>Mg(2+)</name>
        <dbReference type="ChEBI" id="CHEBI:18420"/>
    </ligand>
</feature>
<feature type="binding site" evidence="1">
    <location>
        <position position="819"/>
    </location>
    <ligand>
        <name>Zn(2+)</name>
        <dbReference type="ChEBI" id="CHEBI:29105"/>
        <label>2</label>
    </ligand>
</feature>
<feature type="binding site" evidence="1">
    <location>
        <position position="893"/>
    </location>
    <ligand>
        <name>Zn(2+)</name>
        <dbReference type="ChEBI" id="CHEBI:29105"/>
        <label>2</label>
    </ligand>
</feature>
<feature type="binding site" evidence="1">
    <location>
        <position position="900"/>
    </location>
    <ligand>
        <name>Zn(2+)</name>
        <dbReference type="ChEBI" id="CHEBI:29105"/>
        <label>2</label>
    </ligand>
</feature>
<feature type="binding site" evidence="1">
    <location>
        <position position="903"/>
    </location>
    <ligand>
        <name>Zn(2+)</name>
        <dbReference type="ChEBI" id="CHEBI:29105"/>
        <label>2</label>
    </ligand>
</feature>
<comment type="function">
    <text evidence="1">DNA-dependent RNA polymerase catalyzes the transcription of DNA into RNA using the four ribonucleoside triphosphates as substrates.</text>
</comment>
<comment type="catalytic activity">
    <reaction evidence="1">
        <text>RNA(n) + a ribonucleoside 5'-triphosphate = RNA(n+1) + diphosphate</text>
        <dbReference type="Rhea" id="RHEA:21248"/>
        <dbReference type="Rhea" id="RHEA-COMP:14527"/>
        <dbReference type="Rhea" id="RHEA-COMP:17342"/>
        <dbReference type="ChEBI" id="CHEBI:33019"/>
        <dbReference type="ChEBI" id="CHEBI:61557"/>
        <dbReference type="ChEBI" id="CHEBI:140395"/>
        <dbReference type="EC" id="2.7.7.6"/>
    </reaction>
</comment>
<comment type="cofactor">
    <cofactor evidence="1">
        <name>Mg(2+)</name>
        <dbReference type="ChEBI" id="CHEBI:18420"/>
    </cofactor>
    <text evidence="1">Binds 1 Mg(2+) ion per subunit.</text>
</comment>
<comment type="cofactor">
    <cofactor evidence="1">
        <name>Zn(2+)</name>
        <dbReference type="ChEBI" id="CHEBI:29105"/>
    </cofactor>
    <text evidence="1">Binds 2 Zn(2+) ions per subunit.</text>
</comment>
<comment type="subunit">
    <text evidence="1">The RNAP catalytic core consists of 2 alpha, 1 beta, 1 beta' and 1 omega subunit. When a sigma factor is associated with the core the holoenzyme is formed, which can initiate transcription.</text>
</comment>
<comment type="similarity">
    <text evidence="1">Belongs to the RNA polymerase beta' chain family.</text>
</comment>
<comment type="sequence caution" evidence="2">
    <conflict type="erroneous initiation">
        <sequence resource="EMBL-CDS" id="BAC63172"/>
    </conflict>
    <text>Truncated N-terminus.</text>
</comment>
<name>RPOC_STRPQ</name>
<sequence>MVDVNRFKSMQITLASPSKVRSWSYGEVKKPETINYRTLKPEREGLFDEVIFGPTKDWECACGKYKRIRYKGIVCDRCGVEVTRAKVRRERMGHIELKAPVSHIWYFKGIPSRMGLTLDMSPRALEEVIYFAAYVVIDPKDTPLEPKSLLTEREYREKLQEYGHGSFVAKMGAEAIQDLLKRVDLAAEIAELKEELKSASGQKRIKAVRRLDVLDAFNKSGNKPEWMVLNILPVIPPDLRPMVQLDGGRFAASDLNDLYRRVINRNNRLARLLELNAPGIIVQNEKRMLQEAVDALIDNGRRGRPITGPGSRPLKSLSHMLKGKQGRFRQNLLGKRVDFSGRSVIAVGPTLKMYQCGVPREMAIELFKPFVMREIVAKEYAGNVKAAKRMVERGDERIWDILEEVIKEHPVLLNRAPTLHRLGIQAFEPVLIDGKALRLHPLVCEAYNADFDGDQMAIHVPLSEEAQAEARLLMLAAEHILNPKDGKPVVTPSQDMVLGNYYLTMEDAGREGEGMIFKDKDEAVMAYRNGYAHLHSRVGIAVDSMPNKPWKDSQRHKIMVTTVGKILFNDIMPEDLPYLQEPNNANLTEGTPDKYFLEPGQNIQEVIDGLDINVPFKKKNLGNIIAETFKRFRTTETSAFLDRLKDLGYYHSTLAGLTVGIADIPVIDNKAEIIDAAHHRVEEINKAFRRGLMTDDDRYVAVTTTWREAKEALEKRLIETQDPKNPIVMMMDSGARGNISNFSQLAGMRGLMAAPNGRIMELPILSNFREGLSVLEMFFSTHGARKGMTDTALKTADSGYLTRRLVDVAQDVIIREDDCGTDRGLLIRAITDGKEVTETLEVRLQGRYTRKSVKHPETGEVLIGADQLITEDMARKIVDAGVEEVTIRSVFTCATRHGVCRHCYGINLATGDAVEVGEAVGTIAAQSIGEPGTQLTMRTFHTGGVASNTDITQGLPRIQEIFEARNPKGEAVITEVKGNVVEIEEDASTRTKKVYVQGKTGMGEYVVPFTARMKVEVGDEVNRGAALTEGSIQPKRLLEVRDTLSVETYLLAEVQKVYRSQGVEIGDKHVEVMVRQMLRKVRVMDPGDTDLLPGTLMDISDFTDANKDIVISGGIPATSRPVLMGITKASLETNSFLSAASFQETTRVLTDAAIRGKKDHLLGLKENVIIGKIIPAGTGMARYRNIEPQAMNEIEVIDHTEVSAEAE</sequence>
<reference key="1">
    <citation type="journal article" date="2003" name="Genome Res.">
        <title>Genome sequence of an M3 strain of Streptococcus pyogenes reveals a large-scale genomic rearrangement in invasive strains and new insights into phage evolution.</title>
        <authorList>
            <person name="Nakagawa I."/>
            <person name="Kurokawa K."/>
            <person name="Yamashita A."/>
            <person name="Nakata M."/>
            <person name="Tomiyasu Y."/>
            <person name="Okahashi N."/>
            <person name="Kawabata S."/>
            <person name="Yamazaki K."/>
            <person name="Shiba T."/>
            <person name="Yasunaga T."/>
            <person name="Hayashi H."/>
            <person name="Hattori M."/>
            <person name="Hamada S."/>
        </authorList>
    </citation>
    <scope>NUCLEOTIDE SEQUENCE [LARGE SCALE GENOMIC DNA]</scope>
    <source>
        <strain>SSI-1</strain>
    </source>
</reference>
<accession>P0DF33</accession>
<accession>Q8K8W2</accession>
<proteinExistence type="inferred from homology"/>
<gene>
    <name evidence="1" type="primary">rpoC</name>
    <name type="ordered locus">SPs0077</name>
</gene>
<dbReference type="EC" id="2.7.7.6" evidence="1"/>
<dbReference type="EMBL" id="BA000034">
    <property type="protein sequence ID" value="BAC63172.1"/>
    <property type="status" value="ALT_INIT"/>
    <property type="molecule type" value="Genomic_DNA"/>
</dbReference>
<dbReference type="RefSeq" id="WP_038432128.1">
    <property type="nucleotide sequence ID" value="NC_004606.1"/>
</dbReference>
<dbReference type="SMR" id="P0DF33"/>
<dbReference type="KEGG" id="sps:SPs0077"/>
<dbReference type="HOGENOM" id="CLU_000524_3_1_9"/>
<dbReference type="GO" id="GO:0000428">
    <property type="term" value="C:DNA-directed RNA polymerase complex"/>
    <property type="evidence" value="ECO:0007669"/>
    <property type="project" value="UniProtKB-KW"/>
</dbReference>
<dbReference type="GO" id="GO:0003677">
    <property type="term" value="F:DNA binding"/>
    <property type="evidence" value="ECO:0007669"/>
    <property type="project" value="UniProtKB-UniRule"/>
</dbReference>
<dbReference type="GO" id="GO:0003899">
    <property type="term" value="F:DNA-directed RNA polymerase activity"/>
    <property type="evidence" value="ECO:0007669"/>
    <property type="project" value="UniProtKB-UniRule"/>
</dbReference>
<dbReference type="GO" id="GO:0000287">
    <property type="term" value="F:magnesium ion binding"/>
    <property type="evidence" value="ECO:0007669"/>
    <property type="project" value="UniProtKB-UniRule"/>
</dbReference>
<dbReference type="GO" id="GO:0008270">
    <property type="term" value="F:zinc ion binding"/>
    <property type="evidence" value="ECO:0007669"/>
    <property type="project" value="UniProtKB-UniRule"/>
</dbReference>
<dbReference type="GO" id="GO:0006351">
    <property type="term" value="P:DNA-templated transcription"/>
    <property type="evidence" value="ECO:0007669"/>
    <property type="project" value="UniProtKB-UniRule"/>
</dbReference>
<dbReference type="CDD" id="cd02655">
    <property type="entry name" value="RNAP_beta'_C"/>
    <property type="match status" value="1"/>
</dbReference>
<dbReference type="CDD" id="cd01609">
    <property type="entry name" value="RNAP_beta'_N"/>
    <property type="match status" value="1"/>
</dbReference>
<dbReference type="FunFam" id="1.10.150.390:FF:000002">
    <property type="entry name" value="DNA-directed RNA polymerase subunit beta"/>
    <property type="match status" value="1"/>
</dbReference>
<dbReference type="FunFam" id="4.10.860.120:FF:000001">
    <property type="entry name" value="DNA-directed RNA polymerase subunit beta"/>
    <property type="match status" value="1"/>
</dbReference>
<dbReference type="Gene3D" id="1.10.132.30">
    <property type="match status" value="1"/>
</dbReference>
<dbReference type="Gene3D" id="1.10.150.390">
    <property type="match status" value="1"/>
</dbReference>
<dbReference type="Gene3D" id="1.10.1790.20">
    <property type="match status" value="1"/>
</dbReference>
<dbReference type="Gene3D" id="1.10.40.90">
    <property type="match status" value="1"/>
</dbReference>
<dbReference type="Gene3D" id="2.40.40.20">
    <property type="match status" value="1"/>
</dbReference>
<dbReference type="Gene3D" id="2.40.50.100">
    <property type="match status" value="1"/>
</dbReference>
<dbReference type="Gene3D" id="4.10.860.120">
    <property type="entry name" value="RNA polymerase II, clamp domain"/>
    <property type="match status" value="1"/>
</dbReference>
<dbReference type="Gene3D" id="1.10.274.100">
    <property type="entry name" value="RNA polymerase Rpb1, domain 3"/>
    <property type="match status" value="1"/>
</dbReference>
<dbReference type="HAMAP" id="MF_01322">
    <property type="entry name" value="RNApol_bact_RpoC"/>
    <property type="match status" value="1"/>
</dbReference>
<dbReference type="InterPro" id="IPR045867">
    <property type="entry name" value="DNA-dir_RpoC_beta_prime"/>
</dbReference>
<dbReference type="InterPro" id="IPR012754">
    <property type="entry name" value="DNA-dir_RpoC_beta_prime_bact"/>
</dbReference>
<dbReference type="InterPro" id="IPR000722">
    <property type="entry name" value="RNA_pol_asu"/>
</dbReference>
<dbReference type="InterPro" id="IPR006592">
    <property type="entry name" value="RNA_pol_N"/>
</dbReference>
<dbReference type="InterPro" id="IPR007080">
    <property type="entry name" value="RNA_pol_Rpb1_1"/>
</dbReference>
<dbReference type="InterPro" id="IPR007066">
    <property type="entry name" value="RNA_pol_Rpb1_3"/>
</dbReference>
<dbReference type="InterPro" id="IPR042102">
    <property type="entry name" value="RNA_pol_Rpb1_3_sf"/>
</dbReference>
<dbReference type="InterPro" id="IPR007083">
    <property type="entry name" value="RNA_pol_Rpb1_4"/>
</dbReference>
<dbReference type="InterPro" id="IPR007081">
    <property type="entry name" value="RNA_pol_Rpb1_5"/>
</dbReference>
<dbReference type="InterPro" id="IPR044893">
    <property type="entry name" value="RNA_pol_Rpb1_clamp_domain"/>
</dbReference>
<dbReference type="InterPro" id="IPR038120">
    <property type="entry name" value="Rpb1_funnel_sf"/>
</dbReference>
<dbReference type="NCBIfam" id="TIGR02386">
    <property type="entry name" value="rpoC_TIGR"/>
    <property type="match status" value="1"/>
</dbReference>
<dbReference type="PANTHER" id="PTHR19376">
    <property type="entry name" value="DNA-DIRECTED RNA POLYMERASE"/>
    <property type="match status" value="1"/>
</dbReference>
<dbReference type="PANTHER" id="PTHR19376:SF54">
    <property type="entry name" value="DNA-DIRECTED RNA POLYMERASE SUBUNIT BETA"/>
    <property type="match status" value="1"/>
</dbReference>
<dbReference type="Pfam" id="PF04997">
    <property type="entry name" value="RNA_pol_Rpb1_1"/>
    <property type="match status" value="1"/>
</dbReference>
<dbReference type="Pfam" id="PF00623">
    <property type="entry name" value="RNA_pol_Rpb1_2"/>
    <property type="match status" value="2"/>
</dbReference>
<dbReference type="Pfam" id="PF04983">
    <property type="entry name" value="RNA_pol_Rpb1_3"/>
    <property type="match status" value="1"/>
</dbReference>
<dbReference type="Pfam" id="PF05000">
    <property type="entry name" value="RNA_pol_Rpb1_4"/>
    <property type="match status" value="1"/>
</dbReference>
<dbReference type="Pfam" id="PF04998">
    <property type="entry name" value="RNA_pol_Rpb1_5"/>
    <property type="match status" value="1"/>
</dbReference>
<dbReference type="SMART" id="SM00663">
    <property type="entry name" value="RPOLA_N"/>
    <property type="match status" value="1"/>
</dbReference>
<dbReference type="SUPFAM" id="SSF64484">
    <property type="entry name" value="beta and beta-prime subunits of DNA dependent RNA-polymerase"/>
    <property type="match status" value="1"/>
</dbReference>